<reference key="1">
    <citation type="journal article" date="2004" name="Nature">
        <title>DNA sequence and comparative analysis of chimpanzee chromosome 22.</title>
        <authorList>
            <person name="Watanabe H."/>
            <person name="Fujiyama A."/>
            <person name="Hattori M."/>
            <person name="Taylor T.D."/>
            <person name="Toyoda A."/>
            <person name="Kuroki Y."/>
            <person name="Noguchi H."/>
            <person name="BenKahla A."/>
            <person name="Lehrach H."/>
            <person name="Sudbrak R."/>
            <person name="Kube M."/>
            <person name="Taenzer S."/>
            <person name="Galgoczy P."/>
            <person name="Platzer M."/>
            <person name="Scharfe M."/>
            <person name="Nordsiek G."/>
            <person name="Bloecker H."/>
            <person name="Hellmann I."/>
            <person name="Khaitovich P."/>
            <person name="Paeaebo S."/>
            <person name="Reinhardt R."/>
            <person name="Zheng H.-J."/>
            <person name="Zhang X.-L."/>
            <person name="Zhu G.-F."/>
            <person name="Wang B.-F."/>
            <person name="Fu G."/>
            <person name="Ren S.-X."/>
            <person name="Zhao G.-P."/>
            <person name="Chen Z."/>
            <person name="Lee Y.-S."/>
            <person name="Cheong J.-E."/>
            <person name="Choi S.-H."/>
            <person name="Wu K.-M."/>
            <person name="Liu T.-T."/>
            <person name="Hsiao K.-J."/>
            <person name="Tsai S.-F."/>
            <person name="Kim C.-G."/>
            <person name="Oota S."/>
            <person name="Kitano T."/>
            <person name="Kohara Y."/>
            <person name="Saitou N."/>
            <person name="Park H.-S."/>
            <person name="Wang S.-Y."/>
            <person name="Yaspo M.-L."/>
            <person name="Sakaki Y."/>
        </authorList>
    </citation>
    <scope>NUCLEOTIDE SEQUENCE [LARGE SCALE GENOMIC DNA]</scope>
</reference>
<accession>Q68US1</accession>
<gene>
    <name type="primary">TCP10L</name>
</gene>
<feature type="chain" id="PRO_0000072463" description="T-complex protein 10A homolog 1">
    <location>
        <begin position="1"/>
        <end position="217"/>
    </location>
</feature>
<feature type="region of interest" description="Disordered" evidence="3">
    <location>
        <begin position="1"/>
        <end position="26"/>
    </location>
</feature>
<feature type="region of interest" description="Leucine-zipper">
    <location>
        <begin position="75"/>
        <end position="96"/>
    </location>
</feature>
<feature type="region of interest" description="Disordered" evidence="3">
    <location>
        <begin position="175"/>
        <end position="217"/>
    </location>
</feature>
<feature type="coiled-coil region" evidence="2">
    <location>
        <begin position="69"/>
        <end position="110"/>
    </location>
</feature>
<feature type="compositionally biased region" description="Basic and acidic residues" evidence="3">
    <location>
        <begin position="7"/>
        <end position="19"/>
    </location>
</feature>
<feature type="compositionally biased region" description="Basic and acidic residues" evidence="3">
    <location>
        <begin position="175"/>
        <end position="192"/>
    </location>
</feature>
<name>TCP1L_PANTR</name>
<proteinExistence type="inferred from homology"/>
<sequence length="217" mass="24038">MLAGQLEARDPKEGTHPEDPCPGAGAVTEKTAVAAEVLTEDCNAGEMPPLQQQVIRLHQELGRQKSLWADVHGKLRSHIDALREQNMELREKLRALQLQRWKARKKSAASPHAGQESHTLALEPAFGKMSPLSADEETIPKYIGRKNQSATLLGQFSSSKGDPLCLSSPMSLKIERISSWKTPPQEKRDKSLSRRRQDRRATPTGRPTPCAERRGGV</sequence>
<dbReference type="EMBL" id="AL954209">
    <property type="protein sequence ID" value="CAH18590.1"/>
    <property type="molecule type" value="Genomic_DNA"/>
</dbReference>
<dbReference type="SMR" id="Q68US1"/>
<dbReference type="FunCoup" id="Q68US1">
    <property type="interactions" value="23"/>
</dbReference>
<dbReference type="STRING" id="9598.ENSPTRP00000055314"/>
<dbReference type="InParanoid" id="Q68US1"/>
<dbReference type="Proteomes" id="UP000002277">
    <property type="component" value="Unplaced"/>
</dbReference>
<dbReference type="Proteomes" id="UP000243858">
    <property type="component" value="Chromosome 22"/>
</dbReference>
<dbReference type="GO" id="GO:0005634">
    <property type="term" value="C:nucleus"/>
    <property type="evidence" value="ECO:0007669"/>
    <property type="project" value="UniProtKB-SubCell"/>
</dbReference>
<dbReference type="InterPro" id="IPR026581">
    <property type="entry name" value="TCP10L/CENPJ"/>
</dbReference>
<dbReference type="PANTHER" id="PTHR10331">
    <property type="entry name" value="T COMPLEX PROTEIN 10"/>
    <property type="match status" value="1"/>
</dbReference>
<dbReference type="PANTHER" id="PTHR10331:SF25">
    <property type="entry name" value="T-COMPLEX PROTEIN 10A-RELATED"/>
    <property type="match status" value="1"/>
</dbReference>
<evidence type="ECO:0000250" key="1">
    <source>
        <dbReference type="UniProtKB" id="Q8TDR4"/>
    </source>
</evidence>
<evidence type="ECO:0000255" key="2"/>
<evidence type="ECO:0000256" key="3">
    <source>
        <dbReference type="SAM" id="MobiDB-lite"/>
    </source>
</evidence>
<evidence type="ECO:0000305" key="4"/>
<comment type="function">
    <text evidence="1">May be involved in transcriptional regulation. Has in vitro transcription inhibition activity.</text>
</comment>
<comment type="subunit">
    <text evidence="1">Self-associates (via leucine zipper). Interacts (via leucine zipper) with ZIPK/DAPK3 (via leucine zipper). Interacts with MAD4.</text>
</comment>
<comment type="subcellular location">
    <subcellularLocation>
        <location evidence="1">Nucleus</location>
    </subcellularLocation>
</comment>
<comment type="similarity">
    <text evidence="4">Belongs to the TCP10 family.</text>
</comment>
<protein>
    <recommendedName>
        <fullName>T-complex protein 10A homolog 1</fullName>
        <shortName>T-complex protein 10A-1</shortName>
        <shortName>TCP10A-1</shortName>
    </recommendedName>
    <alternativeName>
        <fullName>TCP10-like</fullName>
    </alternativeName>
</protein>
<keyword id="KW-0175">Coiled coil</keyword>
<keyword id="KW-0539">Nucleus</keyword>
<keyword id="KW-1185">Reference proteome</keyword>
<keyword id="KW-0678">Repressor</keyword>
<keyword id="KW-0804">Transcription</keyword>
<keyword id="KW-0805">Transcription regulation</keyword>
<organism>
    <name type="scientific">Pan troglodytes</name>
    <name type="common">Chimpanzee</name>
    <dbReference type="NCBI Taxonomy" id="9598"/>
    <lineage>
        <taxon>Eukaryota</taxon>
        <taxon>Metazoa</taxon>
        <taxon>Chordata</taxon>
        <taxon>Craniata</taxon>
        <taxon>Vertebrata</taxon>
        <taxon>Euteleostomi</taxon>
        <taxon>Mammalia</taxon>
        <taxon>Eutheria</taxon>
        <taxon>Euarchontoglires</taxon>
        <taxon>Primates</taxon>
        <taxon>Haplorrhini</taxon>
        <taxon>Catarrhini</taxon>
        <taxon>Hominidae</taxon>
        <taxon>Pan</taxon>
    </lineage>
</organism>